<organism>
    <name type="scientific">Rattus norvegicus</name>
    <name type="common">Rat</name>
    <dbReference type="NCBI Taxonomy" id="10116"/>
    <lineage>
        <taxon>Eukaryota</taxon>
        <taxon>Metazoa</taxon>
        <taxon>Chordata</taxon>
        <taxon>Craniata</taxon>
        <taxon>Vertebrata</taxon>
        <taxon>Euteleostomi</taxon>
        <taxon>Mammalia</taxon>
        <taxon>Eutheria</taxon>
        <taxon>Euarchontoglires</taxon>
        <taxon>Glires</taxon>
        <taxon>Rodentia</taxon>
        <taxon>Myomorpha</taxon>
        <taxon>Muroidea</taxon>
        <taxon>Muridae</taxon>
        <taxon>Murinae</taxon>
        <taxon>Rattus</taxon>
    </lineage>
</organism>
<keyword id="KW-0106">Calcium</keyword>
<keyword id="KW-0130">Cell adhesion</keyword>
<keyword id="KW-1003">Cell membrane</keyword>
<keyword id="KW-0966">Cell projection</keyword>
<keyword id="KW-0256">Endoplasmic reticulum</keyword>
<keyword id="KW-0325">Glycoprotein</keyword>
<keyword id="KW-0333">Golgi apparatus</keyword>
<keyword id="KW-0472">Membrane</keyword>
<keyword id="KW-0628">Postsynaptic cell membrane</keyword>
<keyword id="KW-1185">Reference proteome</keyword>
<keyword id="KW-0677">Repeat</keyword>
<keyword id="KW-0732">Signal</keyword>
<keyword id="KW-0770">Synapse</keyword>
<keyword id="KW-0812">Transmembrane</keyword>
<keyword id="KW-1133">Transmembrane helix</keyword>
<reference key="1">
    <citation type="journal article" date="2002" name="Mol. Cell. Neurosci.">
        <title>The calsyntenins - a family of postsynaptic membrane proteins with distinct neuronal expression patterns.</title>
        <authorList>
            <person name="Hintsch G."/>
            <person name="Zurlinden A."/>
            <person name="Meskenaite V."/>
            <person name="Steuble M."/>
            <person name="Fink-Widmer K."/>
            <person name="Kinter J."/>
            <person name="Sonderegger P."/>
        </authorList>
    </citation>
    <scope>NUCLEOTIDE SEQUENCE [MRNA]</scope>
    <source>
        <strain>OFA</strain>
        <tissue>Brain</tissue>
    </source>
</reference>
<dbReference type="EMBL" id="AJ427342">
    <property type="protein sequence ID" value="CAD20352.1"/>
    <property type="molecule type" value="mRNA"/>
</dbReference>
<dbReference type="RefSeq" id="NP_599204.1">
    <property type="nucleotide sequence ID" value="NM_134377.1"/>
</dbReference>
<dbReference type="SMR" id="Q8VDA1"/>
<dbReference type="FunCoup" id="Q8VDA1">
    <property type="interactions" value="2219"/>
</dbReference>
<dbReference type="STRING" id="10116.ENSRNOP00000070212"/>
<dbReference type="GlyCosmos" id="Q8VDA1">
    <property type="glycosylation" value="6 sites, No reported glycans"/>
</dbReference>
<dbReference type="GlyGen" id="Q8VDA1">
    <property type="glycosylation" value="6 sites"/>
</dbReference>
<dbReference type="PhosphoSitePlus" id="Q8VDA1"/>
<dbReference type="PaxDb" id="10116-ENSRNOP00000060748"/>
<dbReference type="GeneID" id="171394"/>
<dbReference type="KEGG" id="rno:171394"/>
<dbReference type="UCSC" id="RGD:621151">
    <property type="organism name" value="rat"/>
</dbReference>
<dbReference type="AGR" id="RGD:621151"/>
<dbReference type="CTD" id="64084"/>
<dbReference type="RGD" id="621151">
    <property type="gene designation" value="Clstn2"/>
</dbReference>
<dbReference type="eggNOG" id="KOG1834">
    <property type="taxonomic scope" value="Eukaryota"/>
</dbReference>
<dbReference type="InParanoid" id="Q8VDA1"/>
<dbReference type="PhylomeDB" id="Q8VDA1"/>
<dbReference type="PRO" id="PR:Q8VDA1"/>
<dbReference type="Proteomes" id="UP000002494">
    <property type="component" value="Unplaced"/>
</dbReference>
<dbReference type="GO" id="GO:0009986">
    <property type="term" value="C:cell surface"/>
    <property type="evidence" value="ECO:0000266"/>
    <property type="project" value="RGD"/>
</dbReference>
<dbReference type="GO" id="GO:0030425">
    <property type="term" value="C:dendrite"/>
    <property type="evidence" value="ECO:0007669"/>
    <property type="project" value="UniProtKB-SubCell"/>
</dbReference>
<dbReference type="GO" id="GO:0005789">
    <property type="term" value="C:endoplasmic reticulum membrane"/>
    <property type="evidence" value="ECO:0007669"/>
    <property type="project" value="UniProtKB-SubCell"/>
</dbReference>
<dbReference type="GO" id="GO:0098978">
    <property type="term" value="C:glutamatergic synapse"/>
    <property type="evidence" value="ECO:0000266"/>
    <property type="project" value="RGD"/>
</dbReference>
<dbReference type="GO" id="GO:0000139">
    <property type="term" value="C:Golgi membrane"/>
    <property type="evidence" value="ECO:0007669"/>
    <property type="project" value="UniProtKB-SubCell"/>
</dbReference>
<dbReference type="GO" id="GO:0014069">
    <property type="term" value="C:postsynaptic density"/>
    <property type="evidence" value="ECO:0000266"/>
    <property type="project" value="RGD"/>
</dbReference>
<dbReference type="GO" id="GO:0098839">
    <property type="term" value="C:postsynaptic density membrane"/>
    <property type="evidence" value="ECO:0000266"/>
    <property type="project" value="RGD"/>
</dbReference>
<dbReference type="GO" id="GO:0045211">
    <property type="term" value="C:postsynaptic membrane"/>
    <property type="evidence" value="ECO:0000314"/>
    <property type="project" value="RGD"/>
</dbReference>
<dbReference type="GO" id="GO:0005509">
    <property type="term" value="F:calcium ion binding"/>
    <property type="evidence" value="ECO:0007669"/>
    <property type="project" value="InterPro"/>
</dbReference>
<dbReference type="GO" id="GO:0008306">
    <property type="term" value="P:associative learning"/>
    <property type="evidence" value="ECO:0000266"/>
    <property type="project" value="RGD"/>
</dbReference>
<dbReference type="GO" id="GO:0007268">
    <property type="term" value="P:chemical synaptic transmission"/>
    <property type="evidence" value="ECO:0000303"/>
    <property type="project" value="RGD"/>
</dbReference>
<dbReference type="GO" id="GO:0007156">
    <property type="term" value="P:homophilic cell adhesion via plasma membrane adhesion molecules"/>
    <property type="evidence" value="ECO:0007669"/>
    <property type="project" value="InterPro"/>
</dbReference>
<dbReference type="GO" id="GO:1904862">
    <property type="term" value="P:inhibitory synapse assembly"/>
    <property type="evidence" value="ECO:0000266"/>
    <property type="project" value="RGD"/>
</dbReference>
<dbReference type="GO" id="GO:0051965">
    <property type="term" value="P:positive regulation of synapse assembly"/>
    <property type="evidence" value="ECO:0000266"/>
    <property type="project" value="RGD"/>
</dbReference>
<dbReference type="GO" id="GO:0050806">
    <property type="term" value="P:positive regulation of synaptic transmission"/>
    <property type="evidence" value="ECO:0000266"/>
    <property type="project" value="RGD"/>
</dbReference>
<dbReference type="CDD" id="cd11304">
    <property type="entry name" value="Cadherin_repeat"/>
    <property type="match status" value="2"/>
</dbReference>
<dbReference type="FunFam" id="2.60.40.60:FF:000025">
    <property type="entry name" value="Calsyntenin 1"/>
    <property type="match status" value="1"/>
</dbReference>
<dbReference type="FunFam" id="2.60.120.200:FF:000029">
    <property type="entry name" value="Calsyntenin 2"/>
    <property type="match status" value="1"/>
</dbReference>
<dbReference type="FunFam" id="2.60.40.60:FF:000062">
    <property type="entry name" value="Calsyntenin 3"/>
    <property type="match status" value="1"/>
</dbReference>
<dbReference type="Gene3D" id="2.60.120.200">
    <property type="match status" value="1"/>
</dbReference>
<dbReference type="Gene3D" id="2.60.40.60">
    <property type="entry name" value="Cadherins"/>
    <property type="match status" value="2"/>
</dbReference>
<dbReference type="InterPro" id="IPR002126">
    <property type="entry name" value="Cadherin-like_dom"/>
</dbReference>
<dbReference type="InterPro" id="IPR015919">
    <property type="entry name" value="Cadherin-like_sf"/>
</dbReference>
<dbReference type="InterPro" id="IPR045588">
    <property type="entry name" value="CLSTN_C"/>
</dbReference>
<dbReference type="InterPro" id="IPR013320">
    <property type="entry name" value="ConA-like_dom_sf"/>
</dbReference>
<dbReference type="PANTHER" id="PTHR14139">
    <property type="entry name" value="CALSYNTENIN"/>
    <property type="match status" value="1"/>
</dbReference>
<dbReference type="PANTHER" id="PTHR14139:SF3">
    <property type="entry name" value="CALSYNTENIN-2"/>
    <property type="match status" value="1"/>
</dbReference>
<dbReference type="Pfam" id="PF00028">
    <property type="entry name" value="Cadherin"/>
    <property type="match status" value="1"/>
</dbReference>
<dbReference type="Pfam" id="PF19699">
    <property type="entry name" value="CLSTN_C"/>
    <property type="match status" value="1"/>
</dbReference>
<dbReference type="PRINTS" id="PR00205">
    <property type="entry name" value="CADHERIN"/>
</dbReference>
<dbReference type="SMART" id="SM00112">
    <property type="entry name" value="CA"/>
    <property type="match status" value="2"/>
</dbReference>
<dbReference type="SUPFAM" id="SSF49313">
    <property type="entry name" value="Cadherin-like"/>
    <property type="match status" value="2"/>
</dbReference>
<dbReference type="SUPFAM" id="SSF49899">
    <property type="entry name" value="Concanavalin A-like lectins/glucanases"/>
    <property type="match status" value="1"/>
</dbReference>
<dbReference type="PROSITE" id="PS50268">
    <property type="entry name" value="CADHERIN_2"/>
    <property type="match status" value="2"/>
</dbReference>
<gene>
    <name evidence="10" type="primary">Clstn2</name>
    <name type="synonym">Cs2</name>
    <name type="synonym">Cstn2</name>
</gene>
<accession>Q8VDA1</accession>
<protein>
    <recommendedName>
        <fullName evidence="8">Calsyntenin-2</fullName>
    </recommendedName>
</protein>
<sequence>MLPGRLCLVPLLLALGVGSGGGSGDGGDSRRRRLLAAKVNKHKPWIETSYHGVITENNDTVILDPTIVALDKDAPVPFAGEICAFKIHGQELPFEAVVLNKTSGEGRLRAKSPIDCELQKEYTFIIQAYDCGAGPQEAAWKKSHKAVVHIQVKDVNEFAPTFKEPAYKAIVTEGKIYDSILQVEAIDEDCSPQYSQICNYEIVTTDVPFAIDRNGNIRNTEKLSYDKQRQYEILVTAYDCGQKPAAQDTLVQVDVKPVCKPGWQDWTKRIEYQPGSGSMPLFPGIHLETCDGAVSSLQVTAELQTNYIGKGCDRETYSEKSLQKLCGASSGIIDLLPSPSAATNWTAGLLVDSSEMIFKFDGRQGAKIPDGIVPKNLTDQFTITMWMKHGPSPGVRAEKETILCNSDKTEMNRHHYALYVHNCRLVFLLRKDFDQADTFRPAEFHWKLDQICDKEWHYYVINVEFPVVTLYMDGATYEPYLVTNDWPIHPSHIAMQLTVGACWQGGEVAKPRFAQFFHGSLASLTIRPGKMESQKVISCLQACKEGLDINSLESLGRGIKYHFNPSQSILVMEGDDIGNINQALQKVSYINSRQFPTAGVRRLRLSSKVQCFGEDVCISIPDVDAYIMVLQAIEPQITLQGTERFWRPAAQFESARGVTLFPDIKIISTFAKTEASGDLRATGTAPKSAVLEEMLHNLDFCDILVLGGDLDPRQECLELNHSELHQRHLDATNSTAGYSIYGVGSMSRYEQVLHHLRYRNWHPTSLETRRFQIKCSELNGRYTSNEFNLEVSVLHEVRVSDTEHVNHLIVQPPFLQSVYHPETRSSIQRSSVVPSIATVVIIISVCMLVFVVAMGVYRVRIAHQHFIQETEAAKEAEMDWDDSALTITVNPMEKHEGPGHGEDETEGEEEEEAEEGMSSSSSGSDDSEEEEEEGMGRVRHGQSGTSSQRPERSTWNTAGVINIWK</sequence>
<feature type="signal peptide" evidence="5">
    <location>
        <begin position="1"/>
        <end position="20"/>
    </location>
</feature>
<feature type="chain" id="PRO_0000004025" description="Calsyntenin-2">
    <location>
        <begin position="21"/>
        <end position="965"/>
    </location>
</feature>
<feature type="topological domain" description="Extracellular" evidence="5">
    <location>
        <begin position="21"/>
        <end position="835"/>
    </location>
</feature>
<feature type="transmembrane region" description="Helical" evidence="5">
    <location>
        <begin position="836"/>
        <end position="856"/>
    </location>
</feature>
<feature type="topological domain" description="Cytoplasmic" evidence="5">
    <location>
        <begin position="857"/>
        <end position="965"/>
    </location>
</feature>
<feature type="domain" description="Cadherin 1" evidence="6">
    <location>
        <begin position="46"/>
        <end position="162"/>
    </location>
</feature>
<feature type="domain" description="Cadherin 2" evidence="6">
    <location>
        <begin position="163"/>
        <end position="282"/>
    </location>
</feature>
<feature type="region of interest" description="Disordered" evidence="7">
    <location>
        <begin position="891"/>
        <end position="965"/>
    </location>
</feature>
<feature type="compositionally biased region" description="Basic and acidic residues" evidence="7">
    <location>
        <begin position="892"/>
        <end position="902"/>
    </location>
</feature>
<feature type="compositionally biased region" description="Acidic residues" evidence="7">
    <location>
        <begin position="903"/>
        <end position="915"/>
    </location>
</feature>
<feature type="compositionally biased region" description="Polar residues" evidence="7">
    <location>
        <begin position="942"/>
        <end position="959"/>
    </location>
</feature>
<feature type="glycosylation site" description="N-linked (GlcNAc...) asparagine" evidence="5">
    <location>
        <position position="58"/>
    </location>
</feature>
<feature type="glycosylation site" description="N-linked (GlcNAc...) asparagine" evidence="5">
    <location>
        <position position="100"/>
    </location>
</feature>
<feature type="glycosylation site" description="N-linked (GlcNAc...) asparagine" evidence="5">
    <location>
        <position position="344"/>
    </location>
</feature>
<feature type="glycosylation site" description="N-linked (GlcNAc...) asparagine" evidence="5">
    <location>
        <position position="376"/>
    </location>
</feature>
<feature type="glycosylation site" description="N-linked (GlcNAc...) asparagine" evidence="5">
    <location>
        <position position="720"/>
    </location>
</feature>
<feature type="glycosylation site" description="N-linked (GlcNAc...) asparagine" evidence="5">
    <location>
        <position position="733"/>
    </location>
</feature>
<comment type="function">
    <text evidence="1 3">Postsynaptic adhesion molecule that binds to presynaptic neurexins to mediate synapse formation, and which is involved in learning and memory (By similarity). Promotes synapse development by acting as a cell adhesion molecule at the postsynaptic membrane, which associates with neurexin-alpha at the presynaptic membrane (By similarity).</text>
</comment>
<comment type="subcellular location">
    <subcellularLocation>
        <location evidence="3">Postsynaptic cell membrane</location>
        <topology evidence="5">Single-pass type I membrane protein</topology>
    </subcellularLocation>
    <subcellularLocation>
        <location evidence="3">Endoplasmic reticulum membrane</location>
        <topology evidence="5">Single-pass type I membrane protein</topology>
    </subcellularLocation>
    <subcellularLocation>
        <location evidence="3">Golgi apparatus membrane</location>
        <topology evidence="5">Single-pass type I membrane protein</topology>
    </subcellularLocation>
    <subcellularLocation>
        <location evidence="3">Cell projection</location>
        <location evidence="3">Dendrite</location>
    </subcellularLocation>
    <text evidence="3">Most prominent in the postsynaptic specializations of asymmetric (type I) synapses with both axodendritic and axospinous localization.</text>
</comment>
<comment type="domain">
    <text evidence="2">Binds synaptic Ca(2+) with its cytoplasmic domain.</text>
</comment>
<comment type="PTM">
    <text evidence="4">Proteolytically processed under normal cellular conditions. A primary zeta-cleavage generates a large extracellular (soluble) N-terminal domain (sAlc) and a short C-terminal transmembrane fragment (CTF1). A secondary cleavage catalyzed by gamma-secretase within the transmembrane domain releases the beta-Alc-gamma chain in the extracellular milieu and produces an intracellular fragment (AlcICD). This processing is strongly suppressed in the tripartite complex formed with APBA2 and APP, which seems to prevent the association with PSEN1.</text>
</comment>
<comment type="similarity">
    <text evidence="9">Belongs to the calsyntenin family.</text>
</comment>
<name>CSTN2_RAT</name>
<evidence type="ECO:0000250" key="1">
    <source>
        <dbReference type="UniProtKB" id="Q99JH7"/>
    </source>
</evidence>
<evidence type="ECO:0000250" key="2">
    <source>
        <dbReference type="UniProtKB" id="Q9EPL2"/>
    </source>
</evidence>
<evidence type="ECO:0000250" key="3">
    <source>
        <dbReference type="UniProtKB" id="Q9ER65"/>
    </source>
</evidence>
<evidence type="ECO:0000250" key="4">
    <source>
        <dbReference type="UniProtKB" id="Q9H4D0"/>
    </source>
</evidence>
<evidence type="ECO:0000255" key="5"/>
<evidence type="ECO:0000255" key="6">
    <source>
        <dbReference type="PROSITE-ProRule" id="PRU00043"/>
    </source>
</evidence>
<evidence type="ECO:0000256" key="7">
    <source>
        <dbReference type="SAM" id="MobiDB-lite"/>
    </source>
</evidence>
<evidence type="ECO:0000303" key="8">
    <source>
    </source>
</evidence>
<evidence type="ECO:0000305" key="9"/>
<evidence type="ECO:0000312" key="10">
    <source>
        <dbReference type="RGD" id="621151"/>
    </source>
</evidence>
<proteinExistence type="evidence at transcript level"/>